<dbReference type="EMBL" id="CP000749">
    <property type="protein sequence ID" value="ABR73152.1"/>
    <property type="molecule type" value="Genomic_DNA"/>
</dbReference>
<dbReference type="SMR" id="A6W373"/>
<dbReference type="STRING" id="400668.Mmwyl1_4257"/>
<dbReference type="KEGG" id="mmw:Mmwyl1_4257"/>
<dbReference type="eggNOG" id="COG0200">
    <property type="taxonomic scope" value="Bacteria"/>
</dbReference>
<dbReference type="HOGENOM" id="CLU_055188_4_2_6"/>
<dbReference type="OrthoDB" id="9810293at2"/>
<dbReference type="GO" id="GO:0022625">
    <property type="term" value="C:cytosolic large ribosomal subunit"/>
    <property type="evidence" value="ECO:0007669"/>
    <property type="project" value="TreeGrafter"/>
</dbReference>
<dbReference type="GO" id="GO:0019843">
    <property type="term" value="F:rRNA binding"/>
    <property type="evidence" value="ECO:0007669"/>
    <property type="project" value="UniProtKB-UniRule"/>
</dbReference>
<dbReference type="GO" id="GO:0003735">
    <property type="term" value="F:structural constituent of ribosome"/>
    <property type="evidence" value="ECO:0007669"/>
    <property type="project" value="InterPro"/>
</dbReference>
<dbReference type="GO" id="GO:0006412">
    <property type="term" value="P:translation"/>
    <property type="evidence" value="ECO:0007669"/>
    <property type="project" value="UniProtKB-UniRule"/>
</dbReference>
<dbReference type="Gene3D" id="3.100.10.10">
    <property type="match status" value="1"/>
</dbReference>
<dbReference type="HAMAP" id="MF_01341">
    <property type="entry name" value="Ribosomal_uL15"/>
    <property type="match status" value="1"/>
</dbReference>
<dbReference type="InterPro" id="IPR030878">
    <property type="entry name" value="Ribosomal_uL15"/>
</dbReference>
<dbReference type="InterPro" id="IPR021131">
    <property type="entry name" value="Ribosomal_uL15/eL18"/>
</dbReference>
<dbReference type="InterPro" id="IPR036227">
    <property type="entry name" value="Ribosomal_uL15/eL18_sf"/>
</dbReference>
<dbReference type="InterPro" id="IPR005749">
    <property type="entry name" value="Ribosomal_uL15_bac-type"/>
</dbReference>
<dbReference type="InterPro" id="IPR001196">
    <property type="entry name" value="Ribosomal_uL15_CS"/>
</dbReference>
<dbReference type="NCBIfam" id="TIGR01071">
    <property type="entry name" value="rplO_bact"/>
    <property type="match status" value="1"/>
</dbReference>
<dbReference type="PANTHER" id="PTHR12934">
    <property type="entry name" value="50S RIBOSOMAL PROTEIN L15"/>
    <property type="match status" value="1"/>
</dbReference>
<dbReference type="PANTHER" id="PTHR12934:SF11">
    <property type="entry name" value="LARGE RIBOSOMAL SUBUNIT PROTEIN UL15M"/>
    <property type="match status" value="1"/>
</dbReference>
<dbReference type="Pfam" id="PF00828">
    <property type="entry name" value="Ribosomal_L27A"/>
    <property type="match status" value="1"/>
</dbReference>
<dbReference type="SUPFAM" id="SSF52080">
    <property type="entry name" value="Ribosomal proteins L15p and L18e"/>
    <property type="match status" value="1"/>
</dbReference>
<dbReference type="PROSITE" id="PS00475">
    <property type="entry name" value="RIBOSOMAL_L15"/>
    <property type="match status" value="1"/>
</dbReference>
<comment type="function">
    <text evidence="1">Binds to the 23S rRNA.</text>
</comment>
<comment type="subunit">
    <text evidence="1">Part of the 50S ribosomal subunit.</text>
</comment>
<comment type="similarity">
    <text evidence="1">Belongs to the universal ribosomal protein uL15 family.</text>
</comment>
<feature type="chain" id="PRO_1000086718" description="Large ribosomal subunit protein uL15">
    <location>
        <begin position="1"/>
        <end position="144"/>
    </location>
</feature>
<feature type="region of interest" description="Disordered" evidence="2">
    <location>
        <begin position="1"/>
        <end position="57"/>
    </location>
</feature>
<feature type="compositionally biased region" description="Gly residues" evidence="2">
    <location>
        <begin position="21"/>
        <end position="31"/>
    </location>
</feature>
<sequence>MFLNTLRPGEGSKHAPKRVGRGIGSGLGKTGGRGHKGLKSRSGGSVKPGFEGGQMPLQRRLPKFGFTSRQAKYVAEVRLNELATVNAEVVDLAALKSADILGHQIKTARVILSGSIDKAITVRGLKVTKGARAAIEAAGGKVEE</sequence>
<keyword id="KW-0687">Ribonucleoprotein</keyword>
<keyword id="KW-0689">Ribosomal protein</keyword>
<keyword id="KW-0694">RNA-binding</keyword>
<keyword id="KW-0699">rRNA-binding</keyword>
<protein>
    <recommendedName>
        <fullName evidence="1">Large ribosomal subunit protein uL15</fullName>
    </recommendedName>
    <alternativeName>
        <fullName evidence="3">50S ribosomal protein L15</fullName>
    </alternativeName>
</protein>
<reference key="1">
    <citation type="submission" date="2007-06" db="EMBL/GenBank/DDBJ databases">
        <title>Complete sequence of Marinomonas sp. MWYL1.</title>
        <authorList>
            <consortium name="US DOE Joint Genome Institute"/>
            <person name="Copeland A."/>
            <person name="Lucas S."/>
            <person name="Lapidus A."/>
            <person name="Barry K."/>
            <person name="Glavina del Rio T."/>
            <person name="Dalin E."/>
            <person name="Tice H."/>
            <person name="Pitluck S."/>
            <person name="Kiss H."/>
            <person name="Brettin T."/>
            <person name="Bruce D."/>
            <person name="Detter J.C."/>
            <person name="Han C."/>
            <person name="Schmutz J."/>
            <person name="Larimer F."/>
            <person name="Land M."/>
            <person name="Hauser L."/>
            <person name="Kyrpides N."/>
            <person name="Kim E."/>
            <person name="Johnston A.W.B."/>
            <person name="Todd J.D."/>
            <person name="Rogers R."/>
            <person name="Wexler M."/>
            <person name="Bond P.L."/>
            <person name="Li Y."/>
            <person name="Richardson P."/>
        </authorList>
    </citation>
    <scope>NUCLEOTIDE SEQUENCE [LARGE SCALE GENOMIC DNA]</scope>
    <source>
        <strain>MWYL1</strain>
    </source>
</reference>
<organism>
    <name type="scientific">Marinomonas sp. (strain MWYL1)</name>
    <dbReference type="NCBI Taxonomy" id="400668"/>
    <lineage>
        <taxon>Bacteria</taxon>
        <taxon>Pseudomonadati</taxon>
        <taxon>Pseudomonadota</taxon>
        <taxon>Gammaproteobacteria</taxon>
        <taxon>Oceanospirillales</taxon>
        <taxon>Oceanospirillaceae</taxon>
        <taxon>Marinomonas</taxon>
    </lineage>
</organism>
<accession>A6W373</accession>
<name>RL15_MARMS</name>
<evidence type="ECO:0000255" key="1">
    <source>
        <dbReference type="HAMAP-Rule" id="MF_01341"/>
    </source>
</evidence>
<evidence type="ECO:0000256" key="2">
    <source>
        <dbReference type="SAM" id="MobiDB-lite"/>
    </source>
</evidence>
<evidence type="ECO:0000305" key="3"/>
<proteinExistence type="inferred from homology"/>
<gene>
    <name evidence="1" type="primary">rplO</name>
    <name type="ordered locus">Mmwyl1_4257</name>
</gene>